<feature type="chain" id="PRO_0000371351" description="Cyclic AMP receptor-like protein E">
    <location>
        <begin position="1"/>
        <end position="330"/>
    </location>
</feature>
<feature type="topological domain" description="Extracellular" evidence="2">
    <location>
        <begin position="1"/>
        <end position="10"/>
    </location>
</feature>
<feature type="transmembrane region" description="Helical; Name=1" evidence="2">
    <location>
        <begin position="11"/>
        <end position="31"/>
    </location>
</feature>
<feature type="topological domain" description="Cytoplasmic" evidence="2">
    <location>
        <begin position="32"/>
        <end position="40"/>
    </location>
</feature>
<feature type="transmembrane region" description="Helical; Name=2" evidence="2">
    <location>
        <begin position="41"/>
        <end position="61"/>
    </location>
</feature>
<feature type="topological domain" description="Extracellular" evidence="2">
    <location>
        <begin position="62"/>
        <end position="85"/>
    </location>
</feature>
<feature type="transmembrane region" description="Helical; Name=3" evidence="2">
    <location>
        <begin position="86"/>
        <end position="106"/>
    </location>
</feature>
<feature type="topological domain" description="Cytoplasmic" evidence="2">
    <location>
        <begin position="107"/>
        <end position="116"/>
    </location>
</feature>
<feature type="transmembrane region" description="Helical; Name=4" evidence="2">
    <location>
        <begin position="117"/>
        <end position="137"/>
    </location>
</feature>
<feature type="topological domain" description="Extracellular" evidence="2">
    <location>
        <begin position="138"/>
        <end position="156"/>
    </location>
</feature>
<feature type="transmembrane region" description="Helical; Name=5" evidence="2">
    <location>
        <begin position="157"/>
        <end position="177"/>
    </location>
</feature>
<feature type="topological domain" description="Cytoplasmic" evidence="2">
    <location>
        <begin position="178"/>
        <end position="213"/>
    </location>
</feature>
<feature type="transmembrane region" description="Helical; Name=6" evidence="2">
    <location>
        <begin position="214"/>
        <end position="234"/>
    </location>
</feature>
<feature type="topological domain" description="Extracellular" evidence="2">
    <location>
        <begin position="235"/>
        <end position="274"/>
    </location>
</feature>
<feature type="transmembrane region" description="Helical; Name=7" evidence="2">
    <location>
        <begin position="275"/>
        <end position="295"/>
    </location>
</feature>
<feature type="topological domain" description="Cytoplasmic" evidence="2">
    <location>
        <begin position="296"/>
        <end position="330"/>
    </location>
</feature>
<feature type="glycosylation site" description="N-linked (GlcNAc...) asparagine" evidence="2">
    <location>
        <position position="269"/>
    </location>
</feature>
<protein>
    <recommendedName>
        <fullName>Cyclic AMP receptor-like protein E</fullName>
    </recommendedName>
</protein>
<comment type="function">
    <text evidence="1">Receptor for cAMP.</text>
</comment>
<comment type="subcellular location">
    <subcellularLocation>
        <location evidence="3">Membrane</location>
        <topology evidence="3">Multi-pass membrane protein</topology>
    </subcellularLocation>
</comment>
<comment type="similarity">
    <text evidence="3">Belongs to the G-protein coupled receptor 5 family.</text>
</comment>
<name>CRLE_DICDI</name>
<gene>
    <name type="primary">crlE</name>
    <name type="ORF">DDB_G0286301</name>
</gene>
<accession>Q54LY7</accession>
<evidence type="ECO:0000250" key="1"/>
<evidence type="ECO:0000255" key="2"/>
<evidence type="ECO:0000305" key="3"/>
<dbReference type="EMBL" id="AAFI02000085">
    <property type="protein sequence ID" value="EAL64326.1"/>
    <property type="molecule type" value="Genomic_DNA"/>
</dbReference>
<dbReference type="RefSeq" id="XP_637844.1">
    <property type="nucleotide sequence ID" value="XM_632752.1"/>
</dbReference>
<dbReference type="SMR" id="Q54LY7"/>
<dbReference type="FunCoup" id="Q54LY7">
    <property type="interactions" value="6"/>
</dbReference>
<dbReference type="GlyCosmos" id="Q54LY7">
    <property type="glycosylation" value="1 site, No reported glycans"/>
</dbReference>
<dbReference type="GlyGen" id="Q54LY7">
    <property type="glycosylation" value="1 site"/>
</dbReference>
<dbReference type="PaxDb" id="44689-DDB0230116"/>
<dbReference type="EnsemblProtists" id="EAL64326">
    <property type="protein sequence ID" value="EAL64326"/>
    <property type="gene ID" value="DDB_G0286301"/>
</dbReference>
<dbReference type="GeneID" id="8625558"/>
<dbReference type="KEGG" id="ddi:DDB_G0286301"/>
<dbReference type="dictyBase" id="DDB_G0286301">
    <property type="gene designation" value="crlE"/>
</dbReference>
<dbReference type="VEuPathDB" id="AmoebaDB:DDB_G0286301"/>
<dbReference type="eggNOG" id="ENOG502RDJA">
    <property type="taxonomic scope" value="Eukaryota"/>
</dbReference>
<dbReference type="HOGENOM" id="CLU_843140_0_0_1"/>
<dbReference type="InParanoid" id="Q54LY7"/>
<dbReference type="OMA" id="FITIKHI"/>
<dbReference type="PhylomeDB" id="Q54LY7"/>
<dbReference type="PRO" id="PR:Q54LY7"/>
<dbReference type="Proteomes" id="UP000002195">
    <property type="component" value="Chromosome 4"/>
</dbReference>
<dbReference type="GO" id="GO:0005886">
    <property type="term" value="C:plasma membrane"/>
    <property type="evidence" value="ECO:0000318"/>
    <property type="project" value="GO_Central"/>
</dbReference>
<dbReference type="GO" id="GO:0004930">
    <property type="term" value="F:G protein-coupled receptor activity"/>
    <property type="evidence" value="ECO:0000318"/>
    <property type="project" value="GO_Central"/>
</dbReference>
<dbReference type="GO" id="GO:0007189">
    <property type="term" value="P:adenylate cyclase-activating G protein-coupled receptor signaling pathway"/>
    <property type="evidence" value="ECO:0000318"/>
    <property type="project" value="GO_Central"/>
</dbReference>
<dbReference type="GO" id="GO:0007166">
    <property type="term" value="P:cell surface receptor signaling pathway"/>
    <property type="evidence" value="ECO:0007669"/>
    <property type="project" value="InterPro"/>
</dbReference>
<dbReference type="Gene3D" id="1.20.1070.10">
    <property type="entry name" value="Rhodopsin 7-helix transmembrane proteins"/>
    <property type="match status" value="1"/>
</dbReference>
<dbReference type="InterPro" id="IPR017981">
    <property type="entry name" value="GPCR_2-like_7TM"/>
</dbReference>
<dbReference type="InterPro" id="IPR000832">
    <property type="entry name" value="GPCR_2_secretin-like"/>
</dbReference>
<dbReference type="PANTHER" id="PTHR23112:SF16">
    <property type="entry name" value="CYCLIC AMP RECEPTOR-LIKE PROTEIN E"/>
    <property type="match status" value="1"/>
</dbReference>
<dbReference type="PANTHER" id="PTHR23112">
    <property type="entry name" value="G PROTEIN-COUPLED RECEPTOR 157-RELATED"/>
    <property type="match status" value="1"/>
</dbReference>
<dbReference type="Pfam" id="PF05462">
    <property type="entry name" value="Dicty_CAR"/>
    <property type="match status" value="1"/>
</dbReference>
<dbReference type="PRINTS" id="PR00249">
    <property type="entry name" value="GPCRSECRETIN"/>
</dbReference>
<dbReference type="PROSITE" id="PS50261">
    <property type="entry name" value="G_PROTEIN_RECEP_F2_4"/>
    <property type="match status" value="1"/>
</dbReference>
<sequence length="330" mass="38215">MLSLSSYVLNLVGSILCLIGCLFIIGHFFWIPLLRTSLSRIIIYPTFILLLYDMVSFPSFISKTADLYIERSTIICNFQEAIIQYLILSNFIWSVCISVNLLYLCFSPNKNLKKNELLYHLCSWGIPLIVVVITKIPNMISDNGNQCRFKSPNYIKFYLETILFIAFMLFNFIVAFITIKHIISGNLRESETTTTSVLFVNEKKITTKKIVWRLLLYPSILSICYIMTLVLSIYQFSTESYGSGGAYANSINNKRNDKNTESGNSNNNNNSYIEILLYISKAIFLLQGFFNALVYLRSSKLRDRYKKITIFRKIFWRDEADYQSINDGFN</sequence>
<keyword id="KW-0297">G-protein coupled receptor</keyword>
<keyword id="KW-0325">Glycoprotein</keyword>
<keyword id="KW-0472">Membrane</keyword>
<keyword id="KW-0675">Receptor</keyword>
<keyword id="KW-1185">Reference proteome</keyword>
<keyword id="KW-0807">Transducer</keyword>
<keyword id="KW-0812">Transmembrane</keyword>
<keyword id="KW-1133">Transmembrane helix</keyword>
<reference key="1">
    <citation type="journal article" date="2005" name="Nature">
        <title>The genome of the social amoeba Dictyostelium discoideum.</title>
        <authorList>
            <person name="Eichinger L."/>
            <person name="Pachebat J.A."/>
            <person name="Gloeckner G."/>
            <person name="Rajandream M.A."/>
            <person name="Sucgang R."/>
            <person name="Berriman M."/>
            <person name="Song J."/>
            <person name="Olsen R."/>
            <person name="Szafranski K."/>
            <person name="Xu Q."/>
            <person name="Tunggal B."/>
            <person name="Kummerfeld S."/>
            <person name="Madera M."/>
            <person name="Konfortov B.A."/>
            <person name="Rivero F."/>
            <person name="Bankier A.T."/>
            <person name="Lehmann R."/>
            <person name="Hamlin N."/>
            <person name="Davies R."/>
            <person name="Gaudet P."/>
            <person name="Fey P."/>
            <person name="Pilcher K."/>
            <person name="Chen G."/>
            <person name="Saunders D."/>
            <person name="Sodergren E.J."/>
            <person name="Davis P."/>
            <person name="Kerhornou A."/>
            <person name="Nie X."/>
            <person name="Hall N."/>
            <person name="Anjard C."/>
            <person name="Hemphill L."/>
            <person name="Bason N."/>
            <person name="Farbrother P."/>
            <person name="Desany B."/>
            <person name="Just E."/>
            <person name="Morio T."/>
            <person name="Rost R."/>
            <person name="Churcher C.M."/>
            <person name="Cooper J."/>
            <person name="Haydock S."/>
            <person name="van Driessche N."/>
            <person name="Cronin A."/>
            <person name="Goodhead I."/>
            <person name="Muzny D.M."/>
            <person name="Mourier T."/>
            <person name="Pain A."/>
            <person name="Lu M."/>
            <person name="Harper D."/>
            <person name="Lindsay R."/>
            <person name="Hauser H."/>
            <person name="James K.D."/>
            <person name="Quiles M."/>
            <person name="Madan Babu M."/>
            <person name="Saito T."/>
            <person name="Buchrieser C."/>
            <person name="Wardroper A."/>
            <person name="Felder M."/>
            <person name="Thangavelu M."/>
            <person name="Johnson D."/>
            <person name="Knights A."/>
            <person name="Loulseged H."/>
            <person name="Mungall K.L."/>
            <person name="Oliver K."/>
            <person name="Price C."/>
            <person name="Quail M.A."/>
            <person name="Urushihara H."/>
            <person name="Hernandez J."/>
            <person name="Rabbinowitsch E."/>
            <person name="Steffen D."/>
            <person name="Sanders M."/>
            <person name="Ma J."/>
            <person name="Kohara Y."/>
            <person name="Sharp S."/>
            <person name="Simmonds M.N."/>
            <person name="Spiegler S."/>
            <person name="Tivey A."/>
            <person name="Sugano S."/>
            <person name="White B."/>
            <person name="Walker D."/>
            <person name="Woodward J.R."/>
            <person name="Winckler T."/>
            <person name="Tanaka Y."/>
            <person name="Shaulsky G."/>
            <person name="Schleicher M."/>
            <person name="Weinstock G.M."/>
            <person name="Rosenthal A."/>
            <person name="Cox E.C."/>
            <person name="Chisholm R.L."/>
            <person name="Gibbs R.A."/>
            <person name="Loomis W.F."/>
            <person name="Platzer M."/>
            <person name="Kay R.R."/>
            <person name="Williams J.G."/>
            <person name="Dear P.H."/>
            <person name="Noegel A.A."/>
            <person name="Barrell B.G."/>
            <person name="Kuspa A."/>
        </authorList>
    </citation>
    <scope>NUCLEOTIDE SEQUENCE [LARGE SCALE GENOMIC DNA]</scope>
    <source>
        <strain>AX4</strain>
    </source>
</reference>
<reference key="2">
    <citation type="journal article" date="2006" name="Eur. J. Cell Biol.">
        <title>The Dictyostelium repertoire of seven transmembrane domain receptors.</title>
        <authorList>
            <person name="Prabhu Y."/>
            <person name="Eichinger L."/>
        </authorList>
    </citation>
    <scope>NOMENCLATURE</scope>
</reference>
<proteinExistence type="inferred from homology"/>
<organism>
    <name type="scientific">Dictyostelium discoideum</name>
    <name type="common">Social amoeba</name>
    <dbReference type="NCBI Taxonomy" id="44689"/>
    <lineage>
        <taxon>Eukaryota</taxon>
        <taxon>Amoebozoa</taxon>
        <taxon>Evosea</taxon>
        <taxon>Eumycetozoa</taxon>
        <taxon>Dictyostelia</taxon>
        <taxon>Dictyosteliales</taxon>
        <taxon>Dictyosteliaceae</taxon>
        <taxon>Dictyostelium</taxon>
    </lineage>
</organism>